<feature type="chain" id="PRO_1000076181" description="Aspartyl/glutamyl-tRNA(Asn/Gln) amidotransferase subunit C">
    <location>
        <begin position="1"/>
        <end position="95"/>
    </location>
</feature>
<accession>A5FQ06</accession>
<protein>
    <recommendedName>
        <fullName evidence="1">Aspartyl/glutamyl-tRNA(Asn/Gln) amidotransferase subunit C</fullName>
        <shortName evidence="1">Asp/Glu-ADT subunit C</shortName>
        <ecNumber evidence="1">6.3.5.-</ecNumber>
    </recommendedName>
</protein>
<sequence length="95" mass="10873">MKLNREDVLHIARLARLGLEEDEINRLSKELSALLEHFEVLQQVDTTGVEPTSQSTPVKSVLKEDTIKPSYAREDILSNAPRREGDYIRIRAVME</sequence>
<reference key="1">
    <citation type="submission" date="2007-05" db="EMBL/GenBank/DDBJ databases">
        <title>Complete sequence of Dehalococcoides sp. BAV1.</title>
        <authorList>
            <consortium name="US DOE Joint Genome Institute"/>
            <person name="Copeland A."/>
            <person name="Lucas S."/>
            <person name="Lapidus A."/>
            <person name="Barry K."/>
            <person name="Detter J.C."/>
            <person name="Glavina del Rio T."/>
            <person name="Hammon N."/>
            <person name="Israni S."/>
            <person name="Pitluck S."/>
            <person name="Lowry S."/>
            <person name="Clum A."/>
            <person name="Schmutz J."/>
            <person name="Larimer F."/>
            <person name="Land M."/>
            <person name="Hauser L."/>
            <person name="Kyrpides N."/>
            <person name="Kim E."/>
            <person name="Ritalahti K.M."/>
            <person name="Loeffler F."/>
            <person name="Richardson P."/>
        </authorList>
    </citation>
    <scope>NUCLEOTIDE SEQUENCE [LARGE SCALE GENOMIC DNA]</scope>
    <source>
        <strain>ATCC BAA-2100 / JCM 16839 / KCTC 5957 / BAV1</strain>
    </source>
</reference>
<keyword id="KW-0067">ATP-binding</keyword>
<keyword id="KW-0436">Ligase</keyword>
<keyword id="KW-0547">Nucleotide-binding</keyword>
<keyword id="KW-0648">Protein biosynthesis</keyword>
<gene>
    <name evidence="1" type="primary">gatC</name>
    <name type="ordered locus">DehaBAV1_1145</name>
</gene>
<name>GATC_DEHMB</name>
<evidence type="ECO:0000255" key="1">
    <source>
        <dbReference type="HAMAP-Rule" id="MF_00122"/>
    </source>
</evidence>
<dbReference type="EC" id="6.3.5.-" evidence="1"/>
<dbReference type="EMBL" id="CP000688">
    <property type="protein sequence ID" value="ABQ17724.1"/>
    <property type="molecule type" value="Genomic_DNA"/>
</dbReference>
<dbReference type="SMR" id="A5FQ06"/>
<dbReference type="KEGG" id="deb:DehaBAV1_1145"/>
<dbReference type="PATRIC" id="fig|216389.18.peg.1208"/>
<dbReference type="HOGENOM" id="CLU_105899_1_2_0"/>
<dbReference type="GO" id="GO:0050566">
    <property type="term" value="F:asparaginyl-tRNA synthase (glutamine-hydrolyzing) activity"/>
    <property type="evidence" value="ECO:0007669"/>
    <property type="project" value="RHEA"/>
</dbReference>
<dbReference type="GO" id="GO:0005524">
    <property type="term" value="F:ATP binding"/>
    <property type="evidence" value="ECO:0007669"/>
    <property type="project" value="UniProtKB-KW"/>
</dbReference>
<dbReference type="GO" id="GO:0050567">
    <property type="term" value="F:glutaminyl-tRNA synthase (glutamine-hydrolyzing) activity"/>
    <property type="evidence" value="ECO:0007669"/>
    <property type="project" value="UniProtKB-UniRule"/>
</dbReference>
<dbReference type="GO" id="GO:0070681">
    <property type="term" value="P:glutaminyl-tRNAGln biosynthesis via transamidation"/>
    <property type="evidence" value="ECO:0007669"/>
    <property type="project" value="TreeGrafter"/>
</dbReference>
<dbReference type="GO" id="GO:0006450">
    <property type="term" value="P:regulation of translational fidelity"/>
    <property type="evidence" value="ECO:0007669"/>
    <property type="project" value="InterPro"/>
</dbReference>
<dbReference type="GO" id="GO:0006412">
    <property type="term" value="P:translation"/>
    <property type="evidence" value="ECO:0007669"/>
    <property type="project" value="UniProtKB-UniRule"/>
</dbReference>
<dbReference type="Gene3D" id="1.10.20.60">
    <property type="entry name" value="Glu-tRNAGln amidotransferase C subunit, N-terminal domain"/>
    <property type="match status" value="1"/>
</dbReference>
<dbReference type="HAMAP" id="MF_00122">
    <property type="entry name" value="GatC"/>
    <property type="match status" value="1"/>
</dbReference>
<dbReference type="InterPro" id="IPR036113">
    <property type="entry name" value="Asp/Glu-ADT_sf_sub_c"/>
</dbReference>
<dbReference type="InterPro" id="IPR003837">
    <property type="entry name" value="GatC"/>
</dbReference>
<dbReference type="NCBIfam" id="TIGR00135">
    <property type="entry name" value="gatC"/>
    <property type="match status" value="1"/>
</dbReference>
<dbReference type="PANTHER" id="PTHR15004">
    <property type="entry name" value="GLUTAMYL-TRNA(GLN) AMIDOTRANSFERASE SUBUNIT C, MITOCHONDRIAL"/>
    <property type="match status" value="1"/>
</dbReference>
<dbReference type="PANTHER" id="PTHR15004:SF0">
    <property type="entry name" value="GLUTAMYL-TRNA(GLN) AMIDOTRANSFERASE SUBUNIT C, MITOCHONDRIAL"/>
    <property type="match status" value="1"/>
</dbReference>
<dbReference type="Pfam" id="PF02686">
    <property type="entry name" value="GatC"/>
    <property type="match status" value="1"/>
</dbReference>
<dbReference type="SUPFAM" id="SSF141000">
    <property type="entry name" value="Glu-tRNAGln amidotransferase C subunit"/>
    <property type="match status" value="1"/>
</dbReference>
<proteinExistence type="inferred from homology"/>
<organism>
    <name type="scientific">Dehalococcoides mccartyi (strain ATCC BAA-2100 / JCM 16839 / KCTC 5957 / BAV1)</name>
    <dbReference type="NCBI Taxonomy" id="216389"/>
    <lineage>
        <taxon>Bacteria</taxon>
        <taxon>Bacillati</taxon>
        <taxon>Chloroflexota</taxon>
        <taxon>Dehalococcoidia</taxon>
        <taxon>Dehalococcoidales</taxon>
        <taxon>Dehalococcoidaceae</taxon>
        <taxon>Dehalococcoides</taxon>
    </lineage>
</organism>
<comment type="function">
    <text evidence="1">Allows the formation of correctly charged Asn-tRNA(Asn) or Gln-tRNA(Gln) through the transamidation of misacylated Asp-tRNA(Asn) or Glu-tRNA(Gln) in organisms which lack either or both of asparaginyl-tRNA or glutaminyl-tRNA synthetases. The reaction takes place in the presence of glutamine and ATP through an activated phospho-Asp-tRNA(Asn) or phospho-Glu-tRNA(Gln).</text>
</comment>
<comment type="catalytic activity">
    <reaction evidence="1">
        <text>L-glutamyl-tRNA(Gln) + L-glutamine + ATP + H2O = L-glutaminyl-tRNA(Gln) + L-glutamate + ADP + phosphate + H(+)</text>
        <dbReference type="Rhea" id="RHEA:17521"/>
        <dbReference type="Rhea" id="RHEA-COMP:9681"/>
        <dbReference type="Rhea" id="RHEA-COMP:9684"/>
        <dbReference type="ChEBI" id="CHEBI:15377"/>
        <dbReference type="ChEBI" id="CHEBI:15378"/>
        <dbReference type="ChEBI" id="CHEBI:29985"/>
        <dbReference type="ChEBI" id="CHEBI:30616"/>
        <dbReference type="ChEBI" id="CHEBI:43474"/>
        <dbReference type="ChEBI" id="CHEBI:58359"/>
        <dbReference type="ChEBI" id="CHEBI:78520"/>
        <dbReference type="ChEBI" id="CHEBI:78521"/>
        <dbReference type="ChEBI" id="CHEBI:456216"/>
    </reaction>
</comment>
<comment type="catalytic activity">
    <reaction evidence="1">
        <text>L-aspartyl-tRNA(Asn) + L-glutamine + ATP + H2O = L-asparaginyl-tRNA(Asn) + L-glutamate + ADP + phosphate + 2 H(+)</text>
        <dbReference type="Rhea" id="RHEA:14513"/>
        <dbReference type="Rhea" id="RHEA-COMP:9674"/>
        <dbReference type="Rhea" id="RHEA-COMP:9677"/>
        <dbReference type="ChEBI" id="CHEBI:15377"/>
        <dbReference type="ChEBI" id="CHEBI:15378"/>
        <dbReference type="ChEBI" id="CHEBI:29985"/>
        <dbReference type="ChEBI" id="CHEBI:30616"/>
        <dbReference type="ChEBI" id="CHEBI:43474"/>
        <dbReference type="ChEBI" id="CHEBI:58359"/>
        <dbReference type="ChEBI" id="CHEBI:78515"/>
        <dbReference type="ChEBI" id="CHEBI:78516"/>
        <dbReference type="ChEBI" id="CHEBI:456216"/>
    </reaction>
</comment>
<comment type="subunit">
    <text evidence="1">Heterotrimer of A, B and C subunits.</text>
</comment>
<comment type="similarity">
    <text evidence="1">Belongs to the GatC family.</text>
</comment>